<sequence length="2753" mass="312022">MARKKLKKFTTLEIVLSVLLLVLFIISIVLIVLLAKESLKSTAPDPGTTGTPDPGTTGTPDPGTTGTTHARTTGPPDPGTTGTTPVSAECPVVNELERINCIPDQPPTKATCDQRGCCWNPQGAVSVPWCYYSKNHSYHVEGNLVNTNAGFTARLKNLPSSPVFGSNVDNVLLTAEYQTSNRFHFKLTDQTNNRFEVPHEHVQSFSGNAAASLTYQVEISRQPFSIKVTRRSNNRVLFDSSIGPLLFADQFLQLSTRLPSTNVYGLGEHVHQQYRHDMNWKTWPIFNRDTTPNGNGTNLYGAQTFFLCLEDASGLSFGVFLMNSNAMEVVLQPAPAITYRTIGGILDFYVFLGNTPEQVVQEYLELIGRPALPSYWALGFHLSRYEYGTLDNMREVVERNRAAQLPYDVQHADIDYMDERRDFTYDSVDFKGFPEFVNELHNNGQKLVIIVDPAISNNSSSSKPYGPYDRGSDMKIWVNSSDGVTPLIGEVWPGQTVFPDYTNPNCAVWWTKEFELFHNQVEFDGIWIDMNEVSNFVDGSVSGCSTNNLNNPPFTPRILDGYLFCKTLCMDAVQHWGKQYDIHNLYGYSMAVATAEAAKTVFPNKRSFILTRSTFAGSGKFAAHWLGDNTATWDDLRWSIPGVLEFNLFGIPMVGPDICGFALDTPEELCRRWMQLGAFYPFSRNHNGQGYKDQDPASFGADSLLLNSSRHYLNIRYTLLPYLYTLFFRAHSRGDTVARPLLHEFYEDNSTWDVHQQFLWGPGLLITPVLDEGAEKVMAYVPDAVWYDYETGSQVRWRKQKVEMELPGDKIGLHLRGGYIFPTQQPNTTTLASRKNPLGLIIALDENKEAKGELFWDNGETKDTVANKVYLLCEFSVTQNRLEVNISQSTYKDPNNLAFNEIKILGTEEPSNVTVKHNGVPSQTSPTVTYDSNLKVAIITDIDLLLGEAYTVEWSIKIRDEEKIDCYPDENGASAENCTARGCIWEASNSSGVPFCYFVNDLYSVSDVQYNSHGATADISLKSSVYANAFPSTPVNPLRLDVTYHKNEMLQFKIYDPNKNRYEVPVPLNIPSMPSSTPEGQLYDVLIKKNPFGIEIRRKSTGTIIWDSQLLGFTFSDMFIRISTRLPSKYLYGFGETEHRSYRRDLEWHTWGMFSRDQPPGYKKNSYGVHPYYMGLEEDGSAHGVLLLNSNAMDVTFQPLPALTYRTTGGVLDFYVFLGPTPELVTQQYTELIGRPVMVPYWSLGFQLCRYGYQNDSEIASLYDEMVAAQIPYDVQYSDIDYMERQLDFTLSPKFAGFPALINRMKADGMRVILILDPAISGNETQPYPAFTRGVEDDVFIKYPNDGDIVWGKVWPDFPDVVVNGSLDWDSQVELYRAYVAFPDFFRNSTAKWWKREIEELYNNPQNPERSLKFDGMWIDMNEPSSFVNGAVSPGCRDASLNHPPYMPHLESRDRGLSSKTLCMESQQILPDGSLVQHYNVHNLYGWSQTRPTYEAVQEVTGQRGVVITRSTFPSSGRWAGHWLGDNTAAWDQLKKSIIGMMEFSLFGISYTGADICGFFQDAEYEMCVRWMQLGAFYPFSRNHNTIGTRRQDPVSWDAAFVNISRNVLQTRYTLLPYLYTLMQKAHTEGVTVVRPLLHEFVSDQVTWDIDSQFLLGPAFLVSPVLERNARNVTAYFPRARWYDYYTGVDINARGEWKTLPAPLDHINLHVRGGYILPWQEPALNTHLSRKNPLGLIIALDENKEAKGELFWDDGQTKDTVAKKVYLLCEFSVTQNHLEVTISQSTYKDPNNLAFNEIKILGMEEPSNVTVKHNGVPSQTSPTVTYDSNLKVAIITDINLFLGEAYTVEWSIKIRDEEKIDCYPDENGDSAENCTARGCIWEASNSSGVPFCYFVNDLYSVSDVQYNSHGATADISLKSSVHANAFPSTPVNPLRLDVTYHKNEMLQFKIYDPNNNRYEVPVPLNIPSVPSSTPEGQLYDVLIKKNPFGIEIRRKSTGTIIWDSQLLGFTFNDMFIRISTRLPSKYLYGFGETEHTSYRRDLEWHTWGMFSRDQPPGYKKNSYGVHPYYMGLEEDGSAHGVLLLNSNAMDVTFQPLPALTYRTTGGVLDFYVFLGPTPELVTQQYTELIGRPVMVPYWSLGFQLCRYGYQNDSEISSLYDEMVAAQIPYDVQYSDIDYMERQLDFTLSPKFAGFPALINRMKADGMRVILILDPAISGNETQPYPAFTRGVEDDVFIKYPNDGDIVWGKVWPDFPDVVVNGSLDWDSQVELYRAYVAFPDFFRNSTAKWWKREIEELYNNPQNPERSLKFDGMWIDMNEPSSFVNGAVSPGCRDASLNHPPYMPYLESRDRGLSSKTLCMESQQILPDGSPVQHYNVHNLYGWSQTRPTYEAVQEVTGQRGVVITRSTFPSSGRWAGHWLGDNTAAWDQLKKSIIGMMEFSLFGISYTGADICGFFQDAEYEMCVRWMQLGAFYPFSRNHNTIGTRRQDPVSWDVAFVNISRTVLQTRYTLLPYLYTLMHKAHTEGVTVVRPLLHEFVSDQVTWDIDSQFLLGPAFLVSPVLERNARNVTAYFPRARWYDYYTGVDINARGEWKTLPAPLDHINLHVRGGYILPWQEPALNTHLSRQKFMGFKIALDDEGTAGGWLFWDDGQSIDTYGKGLYYLASFSASQNTMQSHIIFNNYITGTNPLKLGYIEIWGVGSVPVTSVSISVSGMVITPSFNNDPTTQVLSIDVTDRNISLHNFTSLTWISTL</sequence>
<dbReference type="EC" id="3.2.1.20" evidence="8 9 10 12"/>
<dbReference type="EMBL" id="AF016833">
    <property type="protein sequence ID" value="AAC39568.2"/>
    <property type="molecule type" value="mRNA"/>
</dbReference>
<dbReference type="EMBL" id="AC091684">
    <property type="protein sequence ID" value="AAP21875.1"/>
    <property type="molecule type" value="Genomic_DNA"/>
</dbReference>
<dbReference type="EMBL" id="AC073647">
    <property type="protein sequence ID" value="AAS07445.1"/>
    <property type="molecule type" value="Genomic_DNA"/>
</dbReference>
<dbReference type="EMBL" id="AC091742">
    <property type="status" value="NOT_ANNOTATED_CDS"/>
    <property type="molecule type" value="Genomic_DNA"/>
</dbReference>
<dbReference type="EMBL" id="BC120872">
    <property type="protein sequence ID" value="AAI20873.1"/>
    <property type="molecule type" value="mRNA"/>
</dbReference>
<dbReference type="CCDS" id="CCDS47727.1">
    <molecule id="O43451-1"/>
</dbReference>
<dbReference type="CCDS" id="CCDS94221.1">
    <molecule id="O43451-2"/>
</dbReference>
<dbReference type="RefSeq" id="NP_001352622.1">
    <molecule id="O43451-2"/>
    <property type="nucleotide sequence ID" value="NM_001365693.1"/>
</dbReference>
<dbReference type="RefSeq" id="NP_004659.2">
    <molecule id="O43451-1"/>
    <property type="nucleotide sequence ID" value="NM_004668.3"/>
</dbReference>
<dbReference type="RefSeq" id="XP_006716231.1">
    <property type="nucleotide sequence ID" value="XM_006716168.2"/>
</dbReference>
<dbReference type="RefSeq" id="XP_011514972.1">
    <molecule id="O43451-2"/>
    <property type="nucleotide sequence ID" value="XM_011516670.3"/>
</dbReference>
<dbReference type="RefSeq" id="XP_011514973.1">
    <molecule id="O43451-2"/>
    <property type="nucleotide sequence ID" value="XM_011516671.3"/>
</dbReference>
<dbReference type="RefSeq" id="XP_011514974.1">
    <molecule id="O43451-2"/>
    <property type="nucleotide sequence ID" value="XM_011516672.3"/>
</dbReference>
<dbReference type="RefSeq" id="XP_011514975.1">
    <molecule id="O43451-2"/>
    <property type="nucleotide sequence ID" value="XM_011516673.3"/>
</dbReference>
<dbReference type="RefSeq" id="XP_016868261.1">
    <molecule id="O43451-2"/>
    <property type="nucleotide sequence ID" value="XM_017012772.2"/>
</dbReference>
<dbReference type="RefSeq" id="XP_047276967.1">
    <molecule id="O43451-2"/>
    <property type="nucleotide sequence ID" value="XM_047421011.1"/>
</dbReference>
<dbReference type="RefSeq" id="XP_047276968.1">
    <molecule id="O43451-2"/>
    <property type="nucleotide sequence ID" value="XM_047421012.1"/>
</dbReference>
<dbReference type="PDB" id="2QLY">
    <property type="method" value="X-ray"/>
    <property type="resolution" value="2.00 A"/>
    <property type="chains" value="A=87-954"/>
</dbReference>
<dbReference type="PDB" id="2QMJ">
    <property type="method" value="X-ray"/>
    <property type="resolution" value="1.90 A"/>
    <property type="chains" value="A=87-954"/>
</dbReference>
<dbReference type="PDB" id="3CTT">
    <property type="method" value="X-ray"/>
    <property type="resolution" value="2.10 A"/>
    <property type="chains" value="A=87-954"/>
</dbReference>
<dbReference type="PDB" id="3L4T">
    <property type="method" value="X-ray"/>
    <property type="resolution" value="1.90 A"/>
    <property type="chains" value="A=87-954"/>
</dbReference>
<dbReference type="PDB" id="3L4U">
    <property type="method" value="X-ray"/>
    <property type="resolution" value="1.90 A"/>
    <property type="chains" value="A=87-954"/>
</dbReference>
<dbReference type="PDB" id="3L4V">
    <property type="method" value="X-ray"/>
    <property type="resolution" value="2.10 A"/>
    <property type="chains" value="A=87-954"/>
</dbReference>
<dbReference type="PDB" id="3L4W">
    <property type="method" value="X-ray"/>
    <property type="resolution" value="2.00 A"/>
    <property type="chains" value="A=87-954"/>
</dbReference>
<dbReference type="PDB" id="3L4X">
    <property type="method" value="X-ray"/>
    <property type="resolution" value="1.90 A"/>
    <property type="chains" value="A=87-954"/>
</dbReference>
<dbReference type="PDB" id="3L4Y">
    <property type="method" value="X-ray"/>
    <property type="resolution" value="1.80 A"/>
    <property type="chains" value="A=87-954"/>
</dbReference>
<dbReference type="PDB" id="3L4Z">
    <property type="method" value="X-ray"/>
    <property type="resolution" value="2.00 A"/>
    <property type="chains" value="A=87-954"/>
</dbReference>
<dbReference type="PDB" id="3TON">
    <property type="method" value="X-ray"/>
    <property type="resolution" value="2.95 A"/>
    <property type="chains" value="A/B=960-1853"/>
</dbReference>
<dbReference type="PDB" id="3TOP">
    <property type="method" value="X-ray"/>
    <property type="resolution" value="2.88 A"/>
    <property type="chains" value="A/B=960-1853"/>
</dbReference>
<dbReference type="PDBsum" id="2QLY"/>
<dbReference type="PDBsum" id="2QMJ"/>
<dbReference type="PDBsum" id="3CTT"/>
<dbReference type="PDBsum" id="3L4T"/>
<dbReference type="PDBsum" id="3L4U"/>
<dbReference type="PDBsum" id="3L4V"/>
<dbReference type="PDBsum" id="3L4W"/>
<dbReference type="PDBsum" id="3L4X"/>
<dbReference type="PDBsum" id="3L4Y"/>
<dbReference type="PDBsum" id="3L4Z"/>
<dbReference type="PDBsum" id="3TON"/>
<dbReference type="PDBsum" id="3TOP"/>
<dbReference type="SMR" id="O43451"/>
<dbReference type="BioGRID" id="114462">
    <property type="interactions" value="10"/>
</dbReference>
<dbReference type="CORUM" id="O43451"/>
<dbReference type="FunCoup" id="O43451">
    <property type="interactions" value="272"/>
</dbReference>
<dbReference type="IntAct" id="O43451">
    <property type="interactions" value="34"/>
</dbReference>
<dbReference type="MINT" id="O43451"/>
<dbReference type="STRING" id="9606.ENSP00000447378"/>
<dbReference type="BindingDB" id="O43451"/>
<dbReference type="ChEMBL" id="CHEMBL2074"/>
<dbReference type="DrugBank" id="DB00284">
    <property type="generic name" value="Acarbose"/>
</dbReference>
<dbReference type="DrugBank" id="DB06580">
    <property type="generic name" value="Celgosivir"/>
</dbReference>
<dbReference type="DrugBank" id="DB03206">
    <property type="generic name" value="Duvoglustat"/>
</dbReference>
<dbReference type="DrugBank" id="DB13106">
    <property type="generic name" value="Glycovir"/>
</dbReference>
<dbReference type="DrugBank" id="DB00491">
    <property type="generic name" value="Miglitol"/>
</dbReference>
<dbReference type="DrugBank" id="DB14128">
    <property type="generic name" value="Nadide"/>
</dbReference>
<dbReference type="DrugBank" id="DB04878">
    <property type="generic name" value="Voglibose"/>
</dbReference>
<dbReference type="DrugCentral" id="O43451"/>
<dbReference type="GuidetoPHARMACOLOGY" id="2627"/>
<dbReference type="CAZy" id="GH31">
    <property type="family name" value="Glycoside Hydrolase Family 31"/>
</dbReference>
<dbReference type="UniLectin" id="O43451"/>
<dbReference type="GlyConnect" id="1958">
    <property type="glycosylation" value="24 N-Linked glycans (6 sites)"/>
</dbReference>
<dbReference type="GlyCosmos" id="O43451">
    <property type="glycosylation" value="26 sites, 28 glycans"/>
</dbReference>
<dbReference type="GlyGen" id="O43451">
    <property type="glycosylation" value="28 sites, 106 N-linked glycans (10 sites), 4 O-linked glycans (4 sites)"/>
</dbReference>
<dbReference type="iPTMnet" id="O43451"/>
<dbReference type="PhosphoSitePlus" id="O43451"/>
<dbReference type="BioMuta" id="MGAM"/>
<dbReference type="jPOST" id="O43451"/>
<dbReference type="MassIVE" id="O43451"/>
<dbReference type="PaxDb" id="9606-ENSP00000447378"/>
<dbReference type="PeptideAtlas" id="O43451"/>
<dbReference type="ProteomicsDB" id="17714"/>
<dbReference type="ProteomicsDB" id="48955"/>
<dbReference type="Pumba" id="O43451"/>
<dbReference type="Antibodypedia" id="50132">
    <property type="antibodies" value="41 antibodies from 16 providers"/>
</dbReference>
<dbReference type="DNASU" id="8972"/>
<dbReference type="Ensembl" id="ENST00000475668.6">
    <molecule id="O43451-2"/>
    <property type="protein sequence ID" value="ENSP00000417515.2"/>
    <property type="gene ID" value="ENSG00000257335.8"/>
</dbReference>
<dbReference type="Ensembl" id="ENST00000549489.6">
    <molecule id="O43451-1"/>
    <property type="protein sequence ID" value="ENSP00000447378.2"/>
    <property type="gene ID" value="ENSG00000257335.8"/>
</dbReference>
<dbReference type="Ensembl" id="ENST00000620571.1">
    <molecule id="O43451-1"/>
    <property type="protein sequence ID" value="ENSP00000482292.1"/>
    <property type="gene ID" value="ENSG00000257335.8"/>
</dbReference>
<dbReference type="GeneID" id="8972"/>
<dbReference type="KEGG" id="hsa:8972"/>
<dbReference type="MANE-Select" id="ENST00000475668.6">
    <property type="protein sequence ID" value="ENSP00000417515.2"/>
    <property type="RefSeq nucleotide sequence ID" value="NM_001365693.1"/>
    <property type="RefSeq protein sequence ID" value="NP_001352622.1"/>
</dbReference>
<dbReference type="UCSC" id="uc003vwy.4">
    <molecule id="O43451-2"/>
    <property type="organism name" value="human"/>
</dbReference>
<dbReference type="AGR" id="HGNC:7043"/>
<dbReference type="CTD" id="8972"/>
<dbReference type="DisGeNET" id="8972"/>
<dbReference type="GeneCards" id="MGAM"/>
<dbReference type="HGNC" id="HGNC:7043">
    <property type="gene designation" value="MGAM"/>
</dbReference>
<dbReference type="HPA" id="ENSG00000257335">
    <property type="expression patterns" value="Tissue enhanced (epididymis, intestine)"/>
</dbReference>
<dbReference type="MalaCards" id="MGAM"/>
<dbReference type="MIM" id="154360">
    <property type="type" value="gene"/>
</dbReference>
<dbReference type="neXtProt" id="NX_O43451"/>
<dbReference type="OpenTargets" id="ENSG00000257335"/>
<dbReference type="PharmGKB" id="PA30778"/>
<dbReference type="VEuPathDB" id="HostDB:ENSG00000257335"/>
<dbReference type="eggNOG" id="KOG1065">
    <property type="taxonomic scope" value="Eukaryota"/>
</dbReference>
<dbReference type="GeneTree" id="ENSGT00940000161540"/>
<dbReference type="HOGENOM" id="CLU_000631_3_0_1"/>
<dbReference type="InParanoid" id="O43451"/>
<dbReference type="OMA" id="ISIPWCY"/>
<dbReference type="OrthoDB" id="5839090at2759"/>
<dbReference type="PAN-GO" id="O43451">
    <property type="GO annotations" value="1 GO annotation based on evolutionary models"/>
</dbReference>
<dbReference type="PhylomeDB" id="O43451"/>
<dbReference type="TreeFam" id="TF314577"/>
<dbReference type="BRENDA" id="3.2.1.20">
    <property type="organism ID" value="2681"/>
</dbReference>
<dbReference type="BRENDA" id="3.2.1.3">
    <property type="organism ID" value="2681"/>
</dbReference>
<dbReference type="PathwayCommons" id="O43451"/>
<dbReference type="Reactome" id="R-HSA-189085">
    <property type="pathway name" value="Digestion of dietary carbohydrate"/>
</dbReference>
<dbReference type="Reactome" id="R-HSA-6798695">
    <property type="pathway name" value="Neutrophil degranulation"/>
</dbReference>
<dbReference type="SignaLink" id="O43451"/>
<dbReference type="SIGNOR" id="O43451"/>
<dbReference type="BioGRID-ORCS" id="8972">
    <property type="hits" value="12 hits in 1159 CRISPR screens"/>
</dbReference>
<dbReference type="EvolutionaryTrace" id="O43451"/>
<dbReference type="GeneWiki" id="Maltase-glucoamylase"/>
<dbReference type="GenomeRNAi" id="8972"/>
<dbReference type="Pharos" id="O43451">
    <property type="development level" value="Tclin"/>
</dbReference>
<dbReference type="PRO" id="PR:O43451"/>
<dbReference type="Proteomes" id="UP000005640">
    <property type="component" value="Chromosome 7"/>
</dbReference>
<dbReference type="RNAct" id="O43451">
    <property type="molecule type" value="protein"/>
</dbReference>
<dbReference type="Bgee" id="ENSG00000257335">
    <property type="expression patterns" value="Expressed in duodenum and 97 other cell types or tissues"/>
</dbReference>
<dbReference type="ExpressionAtlas" id="O43451">
    <property type="expression patterns" value="baseline and differential"/>
</dbReference>
<dbReference type="GO" id="GO:0016324">
    <property type="term" value="C:apical plasma membrane"/>
    <property type="evidence" value="ECO:0000314"/>
    <property type="project" value="UniProtKB"/>
</dbReference>
<dbReference type="GO" id="GO:0070062">
    <property type="term" value="C:extracellular exosome"/>
    <property type="evidence" value="ECO:0007005"/>
    <property type="project" value="UniProtKB"/>
</dbReference>
<dbReference type="GO" id="GO:0101003">
    <property type="term" value="C:ficolin-1-rich granule membrane"/>
    <property type="evidence" value="ECO:0000304"/>
    <property type="project" value="Reactome"/>
</dbReference>
<dbReference type="GO" id="GO:0005886">
    <property type="term" value="C:plasma membrane"/>
    <property type="evidence" value="ECO:0000304"/>
    <property type="project" value="Reactome"/>
</dbReference>
<dbReference type="GO" id="GO:0070821">
    <property type="term" value="C:tertiary granule membrane"/>
    <property type="evidence" value="ECO:0000304"/>
    <property type="project" value="Reactome"/>
</dbReference>
<dbReference type="GO" id="GO:0004558">
    <property type="term" value="F:alpha-1,4-glucosidase activity"/>
    <property type="evidence" value="ECO:0000314"/>
    <property type="project" value="UniProtKB"/>
</dbReference>
<dbReference type="GO" id="GO:0016160">
    <property type="term" value="F:amylase activity"/>
    <property type="evidence" value="ECO:0007669"/>
    <property type="project" value="Ensembl"/>
</dbReference>
<dbReference type="GO" id="GO:0030246">
    <property type="term" value="F:carbohydrate binding"/>
    <property type="evidence" value="ECO:0007669"/>
    <property type="project" value="InterPro"/>
</dbReference>
<dbReference type="GO" id="GO:0003824">
    <property type="term" value="F:catalytic activity"/>
    <property type="evidence" value="ECO:0000304"/>
    <property type="project" value="ProtInc"/>
</dbReference>
<dbReference type="GO" id="GO:0004339">
    <property type="term" value="F:glucan 1,4-alpha-glucosidase activity"/>
    <property type="evidence" value="ECO:0007669"/>
    <property type="project" value="UniProtKB-EC"/>
</dbReference>
<dbReference type="GO" id="GO:0004574">
    <property type="term" value="F:oligo-1,6-glucosidase activity"/>
    <property type="evidence" value="ECO:0007669"/>
    <property type="project" value="RHEA"/>
</dbReference>
<dbReference type="GO" id="GO:1901027">
    <property type="term" value="P:dextrin catabolic process"/>
    <property type="evidence" value="ECO:0000314"/>
    <property type="project" value="UniProtKB"/>
</dbReference>
<dbReference type="GO" id="GO:0000025">
    <property type="term" value="P:maltose catabolic process"/>
    <property type="evidence" value="ECO:0000314"/>
    <property type="project" value="UniProtKB"/>
</dbReference>
<dbReference type="GO" id="GO:0005983">
    <property type="term" value="P:starch catabolic process"/>
    <property type="evidence" value="ECO:0000304"/>
    <property type="project" value="ProtInc"/>
</dbReference>
<dbReference type="CDD" id="cd06602">
    <property type="entry name" value="GH31_MGAM_SI_GAA"/>
    <property type="match status" value="3"/>
</dbReference>
<dbReference type="CDD" id="cd14752">
    <property type="entry name" value="GH31_N"/>
    <property type="match status" value="3"/>
</dbReference>
<dbReference type="CDD" id="cd00111">
    <property type="entry name" value="Trefoil"/>
    <property type="match status" value="3"/>
</dbReference>
<dbReference type="FunFam" id="2.60.40.1180:FF:000001">
    <property type="entry name" value="Maltase-glucoamylase, intestinal"/>
    <property type="match status" value="3"/>
</dbReference>
<dbReference type="FunFam" id="2.60.40.1180:FF:000005">
    <property type="entry name" value="Maltase-glucoamylase, intestinal"/>
    <property type="match status" value="3"/>
</dbReference>
<dbReference type="FunFam" id="2.60.40.1760:FF:000001">
    <property type="entry name" value="Maltase-glucoamylase, intestinal"/>
    <property type="match status" value="3"/>
</dbReference>
<dbReference type="FunFam" id="3.20.20.80:FF:000016">
    <property type="entry name" value="Maltase-glucoamylase, intestinal"/>
    <property type="match status" value="3"/>
</dbReference>
<dbReference type="FunFam" id="4.10.110.10:FF:000002">
    <property type="entry name" value="Maltase-glucoamylase, intestinal"/>
    <property type="match status" value="2"/>
</dbReference>
<dbReference type="FunFam" id="4.10.110.10:FF:000003">
    <property type="entry name" value="Maltase-glucoamylase, intestinal"/>
    <property type="match status" value="1"/>
</dbReference>
<dbReference type="Gene3D" id="3.20.20.80">
    <property type="entry name" value="Glycosidases"/>
    <property type="match status" value="3"/>
</dbReference>
<dbReference type="Gene3D" id="2.60.40.1760">
    <property type="entry name" value="glycosyl hydrolase (family 31)"/>
    <property type="match status" value="3"/>
</dbReference>
<dbReference type="Gene3D" id="2.60.40.1180">
    <property type="entry name" value="Golgi alpha-mannosidase II"/>
    <property type="match status" value="6"/>
</dbReference>
<dbReference type="Gene3D" id="4.10.110.10">
    <property type="entry name" value="Spasmolytic Protein, domain 1"/>
    <property type="match status" value="3"/>
</dbReference>
<dbReference type="InterPro" id="IPR011013">
    <property type="entry name" value="Gal_mutarotase_sf_dom"/>
</dbReference>
<dbReference type="InterPro" id="IPR030458">
    <property type="entry name" value="Glyco_hydro_31_AS"/>
</dbReference>
<dbReference type="InterPro" id="IPR048395">
    <property type="entry name" value="Glyco_hydro_31_C"/>
</dbReference>
<dbReference type="InterPro" id="IPR030459">
    <property type="entry name" value="Glyco_hydro_31_CS"/>
</dbReference>
<dbReference type="InterPro" id="IPR025887">
    <property type="entry name" value="Glyco_hydro_31_N_dom"/>
</dbReference>
<dbReference type="InterPro" id="IPR000322">
    <property type="entry name" value="Glyco_hydro_31_TIM"/>
</dbReference>
<dbReference type="InterPro" id="IPR013780">
    <property type="entry name" value="Glyco_hydro_b"/>
</dbReference>
<dbReference type="InterPro" id="IPR017853">
    <property type="entry name" value="Glycoside_hydrolase_SF"/>
</dbReference>
<dbReference type="InterPro" id="IPR017957">
    <property type="entry name" value="P_trefoil_CS"/>
</dbReference>
<dbReference type="InterPro" id="IPR000519">
    <property type="entry name" value="P_trefoil_dom"/>
</dbReference>
<dbReference type="InterPro" id="IPR044913">
    <property type="entry name" value="P_trefoil_dom_sf"/>
</dbReference>
<dbReference type="PANTHER" id="PTHR22762">
    <property type="entry name" value="ALPHA-GLUCOSIDASE"/>
    <property type="match status" value="1"/>
</dbReference>
<dbReference type="PANTHER" id="PTHR22762:SF133">
    <property type="entry name" value="P-TYPE DOMAIN-CONTAINING PROTEIN"/>
    <property type="match status" value="1"/>
</dbReference>
<dbReference type="Pfam" id="PF13802">
    <property type="entry name" value="Gal_mutarotas_2"/>
    <property type="match status" value="1"/>
</dbReference>
<dbReference type="Pfam" id="PF01055">
    <property type="entry name" value="Glyco_hydro_31_2nd"/>
    <property type="match status" value="3"/>
</dbReference>
<dbReference type="Pfam" id="PF21365">
    <property type="entry name" value="Glyco_hydro_31_3rd"/>
    <property type="match status" value="3"/>
</dbReference>
<dbReference type="Pfam" id="PF00088">
    <property type="entry name" value="Trefoil"/>
    <property type="match status" value="3"/>
</dbReference>
<dbReference type="SMART" id="SM00018">
    <property type="entry name" value="PD"/>
    <property type="match status" value="3"/>
</dbReference>
<dbReference type="SUPFAM" id="SSF51445">
    <property type="entry name" value="(Trans)glycosidases"/>
    <property type="match status" value="3"/>
</dbReference>
<dbReference type="SUPFAM" id="SSF74650">
    <property type="entry name" value="Galactose mutarotase-like"/>
    <property type="match status" value="3"/>
</dbReference>
<dbReference type="SUPFAM" id="SSF51011">
    <property type="entry name" value="Glycosyl hydrolase domain"/>
    <property type="match status" value="3"/>
</dbReference>
<dbReference type="PROSITE" id="PS00129">
    <property type="entry name" value="GLYCOSYL_HYDROL_F31_1"/>
    <property type="match status" value="3"/>
</dbReference>
<dbReference type="PROSITE" id="PS00707">
    <property type="entry name" value="GLYCOSYL_HYDROL_F31_2"/>
    <property type="match status" value="1"/>
</dbReference>
<dbReference type="PROSITE" id="PS00025">
    <property type="entry name" value="P_TREFOIL_1"/>
    <property type="match status" value="1"/>
</dbReference>
<dbReference type="PROSITE" id="PS51448">
    <property type="entry name" value="P_TREFOIL_2"/>
    <property type="match status" value="3"/>
</dbReference>
<name>MGA_HUMAN</name>
<gene>
    <name evidence="16 23" type="primary">MGAM</name>
    <name type="synonym">MGA</name>
    <name type="synonym">MGAML</name>
</gene>
<comment type="function">
    <text evidence="6 8 9 10 12">Alpha-(1,4) exo-glucosidase involved in breakdown of dietary starch oligosaccharides in small intestine. Cleaves the non-reducing alpha-(1,4)-linked glucose residue in linear dextrins with retention of anomeric center stereochemistry (PubMed:12547908, PubMed:18036614, PubMed:18356321, PubMed:22058037, PubMed:27480812). Mainly hydrolyzes short length oligomaltoses having two to seven glucose residues (PubMed:12547908, PubMed:18036614, PubMed:18356321, PubMed:22058037, PubMed:27480812). Can cleave alpha-(1,2), alpha-(1,3) and alpha-(1,6) glycosidic linkages with lower efficiency, whereas beta glycosidic linkages are usually not hydrolyzed (PubMed:27480812).</text>
</comment>
<comment type="catalytic activity">
    <reaction evidence="6 8 9 10 12">
        <text>Hydrolysis of terminal, non-reducing (1-&gt;4)-linked alpha-D-glucose residues with release of alpha-D-glucose.</text>
        <dbReference type="EC" id="3.2.1.20"/>
    </reaction>
</comment>
<comment type="catalytic activity">
    <reaction evidence="10">
        <text>D-maltoheptaose + H2O = D-maltohexaose + alpha-D-glucose</text>
        <dbReference type="Rhea" id="RHEA:29643"/>
        <dbReference type="ChEBI" id="CHEBI:15377"/>
        <dbReference type="ChEBI" id="CHEBI:17925"/>
        <dbReference type="ChEBI" id="CHEBI:143182"/>
        <dbReference type="ChEBI" id="CHEBI:143183"/>
    </reaction>
    <physiologicalReaction direction="left-to-right" evidence="20">
        <dbReference type="Rhea" id="RHEA:29644"/>
    </physiologicalReaction>
</comment>
<comment type="catalytic activity">
    <reaction evidence="10">
        <text>D-maltohexaose + H2O = D-maltopentaose + alpha-D-glucose</text>
        <dbReference type="Rhea" id="RHEA:29639"/>
        <dbReference type="ChEBI" id="CHEBI:15377"/>
        <dbReference type="ChEBI" id="CHEBI:17925"/>
        <dbReference type="ChEBI" id="CHEBI:143181"/>
        <dbReference type="ChEBI" id="CHEBI:143182"/>
    </reaction>
    <physiologicalReaction direction="left-to-right" evidence="20">
        <dbReference type="Rhea" id="RHEA:29640"/>
    </physiologicalReaction>
</comment>
<comment type="catalytic activity">
    <reaction evidence="8 9 10">
        <text>D-maltopentaose + H2O = D-maltotetraose + alpha-D-glucose</text>
        <dbReference type="Rhea" id="RHEA:29635"/>
        <dbReference type="ChEBI" id="CHEBI:15377"/>
        <dbReference type="ChEBI" id="CHEBI:17925"/>
        <dbReference type="ChEBI" id="CHEBI:143180"/>
        <dbReference type="ChEBI" id="CHEBI:143181"/>
    </reaction>
    <physiologicalReaction direction="left-to-right" evidence="20">
        <dbReference type="Rhea" id="RHEA:29636"/>
    </physiologicalReaction>
</comment>
<comment type="catalytic activity">
    <reaction evidence="8 9 10">
        <text>D-maltotetraose + H2O = D-maltotriose + alpha-D-glucose</text>
        <dbReference type="Rhea" id="RHEA:29631"/>
        <dbReference type="ChEBI" id="CHEBI:15377"/>
        <dbReference type="ChEBI" id="CHEBI:17925"/>
        <dbReference type="ChEBI" id="CHEBI:140999"/>
        <dbReference type="ChEBI" id="CHEBI:143180"/>
    </reaction>
    <physiologicalReaction direction="left-to-right" evidence="18 19 20">
        <dbReference type="Rhea" id="RHEA:29632"/>
    </physiologicalReaction>
</comment>
<comment type="catalytic activity">
    <reaction evidence="8 9 10">
        <text>D-maltotriose + H2O = D-maltose + alpha-D-glucose</text>
        <dbReference type="Rhea" id="RHEA:27970"/>
        <dbReference type="ChEBI" id="CHEBI:15377"/>
        <dbReference type="ChEBI" id="CHEBI:17306"/>
        <dbReference type="ChEBI" id="CHEBI:17925"/>
        <dbReference type="ChEBI" id="CHEBI:140999"/>
    </reaction>
    <physiologicalReaction direction="left-to-right" evidence="18 19 20">
        <dbReference type="Rhea" id="RHEA:27971"/>
    </physiologicalReaction>
</comment>
<comment type="catalytic activity">
    <reaction evidence="8 9 10 12">
        <text>D-maltose + H2O = alpha-D-glucose + D-glucose</text>
        <dbReference type="Rhea" id="RHEA:68796"/>
        <dbReference type="ChEBI" id="CHEBI:4167"/>
        <dbReference type="ChEBI" id="CHEBI:15377"/>
        <dbReference type="ChEBI" id="CHEBI:17306"/>
        <dbReference type="ChEBI" id="CHEBI:17925"/>
    </reaction>
    <physiologicalReaction direction="left-to-right" evidence="18 19 20 21">
        <dbReference type="Rhea" id="RHEA:68797"/>
    </physiologicalReaction>
</comment>
<comment type="catalytic activity">
    <reaction evidence="12">
        <text>nigerose + H2O = alpha-D-glucose + D-glucose</text>
        <dbReference type="Rhea" id="RHEA:68800"/>
        <dbReference type="ChEBI" id="CHEBI:4167"/>
        <dbReference type="ChEBI" id="CHEBI:7570"/>
        <dbReference type="ChEBI" id="CHEBI:15377"/>
        <dbReference type="ChEBI" id="CHEBI:17925"/>
    </reaction>
    <physiologicalReaction direction="left-to-right" evidence="21">
        <dbReference type="Rhea" id="RHEA:68801"/>
    </physiologicalReaction>
</comment>
<comment type="catalytic activity">
    <reaction evidence="12">
        <text>kojibiose + H2O = alpha-D-glucose + D-glucose</text>
        <dbReference type="Rhea" id="RHEA:68804"/>
        <dbReference type="ChEBI" id="CHEBI:4167"/>
        <dbReference type="ChEBI" id="CHEBI:15377"/>
        <dbReference type="ChEBI" id="CHEBI:17925"/>
        <dbReference type="ChEBI" id="CHEBI:142460"/>
    </reaction>
    <physiologicalReaction direction="left-to-right" evidence="21">
        <dbReference type="Rhea" id="RHEA:68805"/>
    </physiologicalReaction>
</comment>
<comment type="catalytic activity">
    <reaction evidence="12">
        <text>isomaltose + H2O = alpha-D-glucose + D-glucose</text>
        <dbReference type="Rhea" id="RHEA:68864"/>
        <dbReference type="ChEBI" id="CHEBI:4167"/>
        <dbReference type="ChEBI" id="CHEBI:15377"/>
        <dbReference type="ChEBI" id="CHEBI:17925"/>
        <dbReference type="ChEBI" id="CHEBI:28189"/>
    </reaction>
    <physiologicalReaction direction="left-to-right" evidence="21">
        <dbReference type="Rhea" id="RHEA:68865"/>
    </physiologicalReaction>
</comment>
<comment type="catalytic activity">
    <reaction evidence="12">
        <text>6-O-alpha-D-glucopyranosyl-D-fructose + H2O = alpha-D-glucose + D-fructose</text>
        <dbReference type="Rhea" id="RHEA:68808"/>
        <dbReference type="ChEBI" id="CHEBI:15377"/>
        <dbReference type="ChEBI" id="CHEBI:17925"/>
        <dbReference type="ChEBI" id="CHEBI:18394"/>
        <dbReference type="ChEBI" id="CHEBI:37721"/>
    </reaction>
    <physiologicalReaction direction="left-to-right" evidence="21">
        <dbReference type="Rhea" id="RHEA:68809"/>
    </physiologicalReaction>
</comment>
<comment type="activity regulation">
    <text evidence="8 9 10">Down-regulated at high oligomaltose concentration as it occurs during the mealtime (PubMed:18356321). Down-regulated by anti-diabetic drug acarbose (PubMed:18036614, PubMed:22058037).</text>
</comment>
<comment type="biophysicochemical properties">
    <kinetics>
        <KM evidence="10">2.27 mM for maltoheptaose (with ctMGAM)</KM>
        <KM evidence="10">1.05 mM for maltohexaose (with ctMGAM)</KM>
        <KM evidence="10">0.61 mM for maltopentaose (with ctMGAM)</KM>
        <KM evidence="10">0.96 mM for maltotetraose (with ctMGAM)</KM>
        <KM evidence="10">0.91 mM for maltotriose (with ctMGAM)</KM>
        <KM evidence="10">5.67 mM for maltose (with ctMGAM)</KM>
        <KM evidence="10">13.12 mM for maltoheptaose (with ntMGAM)</KM>
        <KM evidence="10">9.76 mM for maltohexaose (with ntMGAM)</KM>
        <KM evidence="10">9.14 mM for maltopentaose (with ntMGAM)</KM>
        <KM evidence="10">3.39 mM for maltotetraose (with ntMGAM)</KM>
        <KM evidence="10">4.44 mM for maltotriose (with ntMGAM)</KM>
        <KM evidence="10">6.4 mM for maltose (with ntMGAM)</KM>
        <KM evidence="8">6.7 mM for maltopentaose (with ntMGAM)</KM>
        <KM evidence="8 9">3 mM for maltotetraose (with ntMGAM)</KM>
        <KM evidence="8 9">4.6 mM for maltotriose (with ntMGAM)</KM>
        <KM evidence="8">7.7 mM for maltose (with ntMGAM)</KM>
        <KM evidence="12">8.7 mM for maltose (with ntMGAM)</KM>
        <KM evidence="12">27.1 mM for nigerose (with ntMGAM)</KM>
        <KM evidence="12">11.6 mM for kojibiose (with ntMGAM)</KM>
        <KM evidence="12">128 mM for isomaltose (with ntMGAM)</KM>
        <KM evidence="9">6.66 mM for maltopentaose (with ntMGAM)</KM>
        <KM evidence="9">7.71 mM for maltose (with ntMGAM)</KM>
        <KM evidence="9">4.34 mM for maltodextrin (with ntMGAM)</KM>
        <KM evidence="9">7 mM for alpha-limit dextrin (with ntMGAM)</KM>
        <Vmax evidence="9">6.97 umol/min/mg enzyme toward maltopentaose (with ntMGAM)</Vmax>
        <Vmax evidence="9">7.65 umol/min/mg enzyme toward maltotetraose (with ntMGAM)</Vmax>
        <Vmax evidence="9">9.58 umol/min/mg enzyme toward maltotriose (with ntMGAM)</Vmax>
        <Vmax evidence="9">8.26 umol/min/mg enzyme toward maltose (with ntMGAM)</Vmax>
        <Vmax evidence="9">7.51 umol/min/mg enzyme toward maltodextrin (with ntMGAM)</Vmax>
        <Vmax evidence="9">11.0 umol/min/mg enzyme toward alpha-limit dextrin (with ntMGAM)</Vmax>
    </kinetics>
    <phDependence>
        <text evidence="9">Optimum pH is 7. Has substantial activity at acidic pH.</text>
    </phDependence>
</comment>
<comment type="pathway">
    <text evidence="18 20 21">Carbohydrate degradation.</text>
</comment>
<comment type="subunit">
    <text evidence="13">Monomer.</text>
</comment>
<comment type="interaction">
    <interactant intactId="EBI-2829774">
        <id>O43451</id>
    </interactant>
    <interactant intactId="EBI-13059134">
        <id>Q13520</id>
        <label>AQP6</label>
    </interactant>
    <organismsDiffer>false</organismsDiffer>
    <experiments>3</experiments>
</comment>
<comment type="interaction">
    <interactant intactId="EBI-2829774">
        <id>O43451</id>
    </interactant>
    <interactant intactId="EBI-18013275">
        <id>Q7Z7G2</id>
        <label>CPLX4</label>
    </interactant>
    <organismsDiffer>false</organismsDiffer>
    <experiments>3</experiments>
</comment>
<comment type="interaction">
    <interactant intactId="EBI-2829774">
        <id>O43451</id>
    </interactant>
    <interactant intactId="EBI-6942903">
        <id>Q96BA8</id>
        <label>CREB3L1</label>
    </interactant>
    <organismsDiffer>false</organismsDiffer>
    <experiments>3</experiments>
</comment>
<comment type="interaction">
    <interactant intactId="EBI-2829774">
        <id>O43451</id>
    </interactant>
    <interactant intactId="EBI-18076404">
        <id>O15529</id>
        <label>GPR42</label>
    </interactant>
    <organismsDiffer>false</organismsDiffer>
    <experiments>3</experiments>
</comment>
<comment type="interaction">
    <interactant intactId="EBI-2829774">
        <id>O43451</id>
    </interactant>
    <interactant intactId="EBI-20801949">
        <id>P14410</id>
        <label>SI</label>
    </interactant>
    <organismsDiffer>false</organismsDiffer>
    <experiments>2</experiments>
</comment>
<comment type="interaction">
    <interactant intactId="EBI-2829774">
        <id>O43451</id>
    </interactant>
    <interactant intactId="EBI-17595455">
        <id>P54219-3</id>
        <label>SLC18A1</label>
    </interactant>
    <organismsDiffer>false</organismsDiffer>
    <experiments>3</experiments>
</comment>
<comment type="interaction">
    <interactant intactId="EBI-2829774">
        <id>O43451</id>
    </interactant>
    <interactant intactId="EBI-8638294">
        <id>Q9NUH8</id>
        <label>TMEM14B</label>
    </interactant>
    <organismsDiffer>false</organismsDiffer>
    <experiments>3</experiments>
</comment>
<comment type="subcellular location">
    <subcellularLocation>
        <location>Apical cell membrane</location>
        <topology>Single-pass type II membrane protein</topology>
    </subcellularLocation>
    <text evidence="13">Brush border.</text>
</comment>
<comment type="alternative products">
    <event type="alternative splicing"/>
    <isoform>
        <id>O43451-2</id>
        <name>2</name>
        <sequence type="displayed"/>
    </isoform>
    <isoform>
        <id>O43451-1</id>
        <name>1</name>
        <sequence type="described" ref="VSP_061364"/>
    </isoform>
</comment>
<comment type="tissue specificity">
    <text evidence="11 14">Broadly expressed. Highly expressed in small intestine. Expressed in granulocytes.</text>
</comment>
<comment type="domain">
    <text evidence="6 8 9 10">The N-terminal maltase domain (ntMGAM) mainly hydrolyzes short length oligomaltoses having two to four glucose residues.</text>
</comment>
<comment type="domain">
    <text evidence="10">The C-terminal glucoamylase domain (ctMGAM) acts on longer maltoside substrates having four to seven glucose residues.</text>
</comment>
<comment type="PTM">
    <text evidence="8 13">N- and O-glycosylated.</text>
</comment>
<comment type="PTM">
    <text evidence="13">Does not undergo intracellular or extracellular proteolytic cleavage.</text>
</comment>
<comment type="PTM">
    <text evidence="1">Sulfated.</text>
</comment>
<comment type="miscellaneous">
    <text evidence="17">The displayed isoform 2 sequence is inferred based on alignments, homology, conservation, expression and longest protein. RNA-seq transcriptomic analysis supports all introns in a single sample. No single full-size mRNA sequence supports this isoform yet, however it is clearly identified by mass spectrometry analysis.</text>
</comment>
<comment type="similarity">
    <text evidence="17">Belongs to the glycosyl hydrolase 31 family.</text>
</comment>
<reference key="1">
    <citation type="journal article" date="1998" name="J. Biol. Chem.">
        <title>Human small intestinal maltase-glucoamylase cDNA cloning. Homology to sucrase-isomaltase.</title>
        <authorList>
            <person name="Nichols B.L."/>
            <person name="Eldering J.A."/>
            <person name="Avery S.E."/>
            <person name="Hahn D."/>
            <person name="Quaroni A."/>
            <person name="Sterchi E.E."/>
        </authorList>
    </citation>
    <scope>NUCLEOTIDE SEQUENCE [MRNA] (ISOFORM 1)</scope>
    <scope>PARTIAL PROTEIN SEQUENCE</scope>
    <scope>VARIANT ASP-858</scope>
    <scope>TISSUE SPECIFICITY</scope>
    <source>
        <tissue>Small intestine</tissue>
    </source>
</reference>
<reference key="2">
    <citation type="submission" date="2001-12" db="EMBL/GenBank/DDBJ databases">
        <authorList>
            <person name="Nichols B.L."/>
            <person name="Eldering J.A."/>
            <person name="Avery S.E."/>
            <person name="Hahn D."/>
            <person name="Quaroni A."/>
            <person name="Sterchi E.E."/>
        </authorList>
    </citation>
    <scope>SEQUENCE REVISION TO 777; 1050; 1101; 1542; 2509 AND 2708</scope>
</reference>
<reference key="3">
    <citation type="journal article" date="2003" name="Nature">
        <title>The DNA sequence of human chromosome 7.</title>
        <authorList>
            <person name="Hillier L.W."/>
            <person name="Fulton R.S."/>
            <person name="Fulton L.A."/>
            <person name="Graves T.A."/>
            <person name="Pepin K.H."/>
            <person name="Wagner-McPherson C."/>
            <person name="Layman D."/>
            <person name="Maas J."/>
            <person name="Jaeger S."/>
            <person name="Walker R."/>
            <person name="Wylie K."/>
            <person name="Sekhon M."/>
            <person name="Becker M.C."/>
            <person name="O'Laughlin M.D."/>
            <person name="Schaller M.E."/>
            <person name="Fewell G.A."/>
            <person name="Delehaunty K.D."/>
            <person name="Miner T.L."/>
            <person name="Nash W.E."/>
            <person name="Cordes M."/>
            <person name="Du H."/>
            <person name="Sun H."/>
            <person name="Edwards J."/>
            <person name="Bradshaw-Cordum H."/>
            <person name="Ali J."/>
            <person name="Andrews S."/>
            <person name="Isak A."/>
            <person name="Vanbrunt A."/>
            <person name="Nguyen C."/>
            <person name="Du F."/>
            <person name="Lamar B."/>
            <person name="Courtney L."/>
            <person name="Kalicki J."/>
            <person name="Ozersky P."/>
            <person name="Bielicki L."/>
            <person name="Scott K."/>
            <person name="Holmes A."/>
            <person name="Harkins R."/>
            <person name="Harris A."/>
            <person name="Strong C.M."/>
            <person name="Hou S."/>
            <person name="Tomlinson C."/>
            <person name="Dauphin-Kohlberg S."/>
            <person name="Kozlowicz-Reilly A."/>
            <person name="Leonard S."/>
            <person name="Rohlfing T."/>
            <person name="Rock S.M."/>
            <person name="Tin-Wollam A.-M."/>
            <person name="Abbott A."/>
            <person name="Minx P."/>
            <person name="Maupin R."/>
            <person name="Strowmatt C."/>
            <person name="Latreille P."/>
            <person name="Miller N."/>
            <person name="Johnson D."/>
            <person name="Murray J."/>
            <person name="Woessner J.P."/>
            <person name="Wendl M.C."/>
            <person name="Yang S.-P."/>
            <person name="Schultz B.R."/>
            <person name="Wallis J.W."/>
            <person name="Spieth J."/>
            <person name="Bieri T.A."/>
            <person name="Nelson J.O."/>
            <person name="Berkowicz N."/>
            <person name="Wohldmann P.E."/>
            <person name="Cook L.L."/>
            <person name="Hickenbotham M.T."/>
            <person name="Eldred J."/>
            <person name="Williams D."/>
            <person name="Bedell J.A."/>
            <person name="Mardis E.R."/>
            <person name="Clifton S.W."/>
            <person name="Chissoe S.L."/>
            <person name="Marra M.A."/>
            <person name="Raymond C."/>
            <person name="Haugen E."/>
            <person name="Gillett W."/>
            <person name="Zhou Y."/>
            <person name="James R."/>
            <person name="Phelps K."/>
            <person name="Iadanoto S."/>
            <person name="Bubb K."/>
            <person name="Simms E."/>
            <person name="Levy R."/>
            <person name="Clendenning J."/>
            <person name="Kaul R."/>
            <person name="Kent W.J."/>
            <person name="Furey T.S."/>
            <person name="Baertsch R.A."/>
            <person name="Brent M.R."/>
            <person name="Keibler E."/>
            <person name="Flicek P."/>
            <person name="Bork P."/>
            <person name="Suyama M."/>
            <person name="Bailey J.A."/>
            <person name="Portnoy M.E."/>
            <person name="Torrents D."/>
            <person name="Chinwalla A.T."/>
            <person name="Gish W.R."/>
            <person name="Eddy S.R."/>
            <person name="McPherson J.D."/>
            <person name="Olson M.V."/>
            <person name="Eichler E.E."/>
            <person name="Green E.D."/>
            <person name="Waterston R.H."/>
            <person name="Wilson R.K."/>
        </authorList>
    </citation>
    <scope>NUCLEOTIDE SEQUENCE [LARGE SCALE GENOMIC DNA] (ISOFORMS 1 AND 2)</scope>
</reference>
<reference key="4">
    <citation type="journal article" date="2004" name="Genome Res.">
        <title>The status, quality, and expansion of the NIH full-length cDNA project: the Mammalian Gene Collection (MGC).</title>
        <authorList>
            <consortium name="The MGC Project Team"/>
        </authorList>
    </citation>
    <scope>NUCLEOTIDE SEQUENCE [LARGE SCALE MRNA]</scope>
    <scope>VARIANT ASP-858</scope>
</reference>
<reference key="5">
    <citation type="journal article" date="2014" name="Mol. Cell. Proteomics">
        <title>Analysis of the human tissue-specific expression by genome-wide integration of transcriptomics and antibody-based proteomics.</title>
        <authorList>
            <person name="Fagerberg L."/>
            <person name="Hallstroem B.M."/>
            <person name="Oksvold P."/>
            <person name="Kampf C."/>
            <person name="Djureinovic D."/>
            <person name="Odeberg J."/>
            <person name="Habuka M."/>
            <person name="Tahmasebpoor S."/>
            <person name="Danielsson A."/>
            <person name="Edlund K."/>
            <person name="Asplund A."/>
            <person name="Sjoestedt E."/>
            <person name="Lundberg E."/>
            <person name="Szigyarto C.A."/>
            <person name="Skogs M."/>
            <person name="Takanen J.O."/>
            <person name="Berling H."/>
            <person name="Tegel H."/>
            <person name="Mulder J."/>
            <person name="Nilsson P."/>
            <person name="Schwenk J.M."/>
            <person name="Lindskog C."/>
            <person name="Danielsson F."/>
            <person name="Mardinoglu A."/>
            <person name="Sivertsson A."/>
            <person name="von Feilitzen K."/>
            <person name="Forsberg M."/>
            <person name="Zwahlen M."/>
            <person name="Olsson I."/>
            <person name="Navani S."/>
            <person name="Huss M."/>
            <person name="Nielsen J."/>
            <person name="Ponten F."/>
            <person name="Uhlen M."/>
        </authorList>
    </citation>
    <scope>NUCLEOTIDE SEQUENCE [LARGE SCALE MRNA]</scope>
    <scope>TISSUE SPECIFICITY</scope>
    <source>
        <tissue>Kidney</tissue>
        <tissue>Stomach</tissue>
    </source>
</reference>
<reference key="6">
    <citation type="journal article" date="1987" name="EMBO J.">
        <title>Tyrosine sulfation, a post-translational modification of microvillar enzymes in the small intestinal enterocyte.</title>
        <authorList>
            <person name="Danielsen E.M."/>
        </authorList>
    </citation>
    <scope>SULFATION</scope>
</reference>
<reference key="7">
    <citation type="journal article" date="1988" name="J. Biol. Chem.">
        <title>Structure, biosynthesis, and glycosylation of human small intestinal maltase-glucoamylase.</title>
        <authorList>
            <person name="Naim H.Y."/>
            <person name="Sterchi E.E."/>
            <person name="Lentze M.J."/>
        </authorList>
    </citation>
    <scope>CHARACTERIZATION</scope>
    <scope>SUBUNIT</scope>
    <scope>SUBCELLULAR LOCATION</scope>
    <scope>PTM</scope>
    <source>
        <tissue>Small intestine mucosa</tissue>
    </source>
</reference>
<reference key="8">
    <citation type="journal article" date="2003" name="Proc. Natl. Acad. Sci. U.S.A.">
        <title>The maltase-glucoamylase gene: common ancestry to sucrase-isomaltase with complementary starch digestion activities.</title>
        <authorList>
            <person name="Nichols B.L."/>
            <person name="Avery S."/>
            <person name="Sen P."/>
            <person name="Swallow D.M."/>
            <person name="Hahn D."/>
            <person name="Sterchi E."/>
        </authorList>
    </citation>
    <scope>FUNCTION</scope>
    <scope>CATALYTIC ACTIVITY</scope>
    <scope>DOMAIN</scope>
    <scope>MUTAGENESIS OF ASP-529</scope>
</reference>
<reference key="9">
    <citation type="journal article" date="2008" name="J. Nutr.">
        <title>Luminal starch substrate brake on maltase-glucoamylase activity is located within the glucoamylase subunit.</title>
        <authorList>
            <person name="Quezada-Calvillo R."/>
            <person name="Sim L."/>
            <person name="Ao Z."/>
            <person name="Hamaker B.R."/>
            <person name="Quaroni A."/>
            <person name="Brayer G.D."/>
            <person name="Sterchi E.E."/>
            <person name="Robayo-Torres C.C."/>
            <person name="Rose D.R."/>
            <person name="Nichols B.L."/>
        </authorList>
    </citation>
    <scope>FUNCTION</scope>
    <scope>CATALYTIC ACTIVITY</scope>
    <scope>ACTIVITY REGULATION</scope>
    <scope>BIOPHYSICOCHEMICAL PROPERTIES</scope>
    <scope>DOMAIN</scope>
</reference>
<reference key="10">
    <citation type="journal article" date="2011" name="Protein Cell">
        <title>Structural insight into substrate specificity of human intestinal maltase-glucoamylase.</title>
        <authorList>
            <person name="Ren L."/>
            <person name="Qin X."/>
            <person name="Cao X."/>
            <person name="Wang L."/>
            <person name="Bai F."/>
            <person name="Bai G."/>
            <person name="Shen Y."/>
        </authorList>
    </citation>
    <scope>FUNCTION</scope>
    <scope>CATALYTIC ACTIVITY</scope>
    <scope>ACTIVITY REGULATION</scope>
    <scope>BIOPHYSICOCHEMICAL PROPERTIES</scope>
    <scope>PATHWAY</scope>
    <scope>DOMAIN</scope>
    <scope>MUTAGENESIS OF TYR-385; TYR-1251 AND 1357-ASP--ARG-1377</scope>
</reference>
<reference key="11">
    <citation type="journal article" date="2016" name="J. Agric. Food Chem.">
        <title>Contribution of the Individual Small Intestinal alpha-Glucosidases to Digestion of Unusual alpha-Linked Glycemic Disaccharides.</title>
        <authorList>
            <person name="Lee B.H."/>
            <person name="Rose D.R."/>
            <person name="Lin A.H."/>
            <person name="Quezada-Calvillo R."/>
            <person name="Nichols B.L."/>
            <person name="Hamaker B.R."/>
        </authorList>
    </citation>
    <scope>FUNCTION</scope>
    <scope>CATALYTIC ACTIVITY</scope>
    <scope>BIOPHYSICOCHEMICAL PROPERTIES</scope>
    <scope>PATHWAY</scope>
</reference>
<reference key="12">
    <citation type="journal article" date="2008" name="J. Mol. Biol.">
        <title>Human intestinal maltase-glucoamylase: crystal structure of the N-terminal catalytic subunit and basis of inhibition and substrate specificity.</title>
        <authorList>
            <person name="Sim L."/>
            <person name="Quezada-Calvillo R."/>
            <person name="Sterchi E.E."/>
            <person name="Nichols B.L."/>
            <person name="Rose D.R."/>
        </authorList>
    </citation>
    <scope>X-RAY CRYSTALLOGRAPHY (1.90 ANGSTROMS) OF 87-954 IN COMPLEX WITH ACARBOSE</scope>
    <scope>GLYCOSYLATION AT ASN-295; ASN-479 AND ASN-827</scope>
    <scope>DISULFIDE BOND</scope>
    <scope>FUNCTION</scope>
    <scope>CATALYTIC ACTIVITY</scope>
    <scope>BIOPHYSICOCHEMICAL PROPERTIES</scope>
    <scope>ACTIVITY REGULATION</scope>
    <scope>DOMAIN</scope>
    <scope>PATHWAY</scope>
</reference>
<organism>
    <name type="scientific">Homo sapiens</name>
    <name type="common">Human</name>
    <dbReference type="NCBI Taxonomy" id="9606"/>
    <lineage>
        <taxon>Eukaryota</taxon>
        <taxon>Metazoa</taxon>
        <taxon>Chordata</taxon>
        <taxon>Craniata</taxon>
        <taxon>Vertebrata</taxon>
        <taxon>Euteleostomi</taxon>
        <taxon>Mammalia</taxon>
        <taxon>Eutheria</taxon>
        <taxon>Euarchontoglires</taxon>
        <taxon>Primates</taxon>
        <taxon>Haplorrhini</taxon>
        <taxon>Catarrhini</taxon>
        <taxon>Hominidae</taxon>
        <taxon>Homo</taxon>
    </lineage>
</organism>
<feature type="chain" id="PRO_0000185363" description="Maltase-glucoamylase">
    <location>
        <begin position="1"/>
        <end position="2753"/>
    </location>
</feature>
<feature type="topological domain" description="Cytoplasmic" evidence="2">
    <location>
        <begin position="1"/>
        <end position="13"/>
    </location>
</feature>
<feature type="transmembrane region" description="Helical; Signal-anchor for type II membrane protein" evidence="2">
    <location>
        <begin position="14"/>
        <end position="34"/>
    </location>
</feature>
<feature type="topological domain" description="Lumenal" evidence="2">
    <location>
        <begin position="35"/>
        <end position="2753"/>
    </location>
</feature>
<feature type="domain" description="P-type 1" evidence="3">
    <location>
        <begin position="88"/>
        <end position="134"/>
    </location>
</feature>
<feature type="domain" description="P-type 2" evidence="3">
    <location>
        <begin position="954"/>
        <end position="1000"/>
    </location>
</feature>
<feature type="domain" description="P-type 3" evidence="3">
    <location>
        <begin position="1850"/>
        <end position="1896"/>
    </location>
</feature>
<feature type="region of interest" description="Disordered" evidence="5">
    <location>
        <begin position="41"/>
        <end position="87"/>
    </location>
</feature>
<feature type="region of interest" description="Maltase" evidence="18">
    <location>
        <begin position="356"/>
        <end position="737"/>
    </location>
</feature>
<feature type="region of interest" description="Glucoamylase" evidence="20">
    <location>
        <begin position="1221"/>
        <end position="1632"/>
    </location>
</feature>
<feature type="compositionally biased region" description="Low complexity" evidence="5">
    <location>
        <begin position="44"/>
        <end position="85"/>
    </location>
</feature>
<feature type="active site" description="Nucleophile" evidence="4">
    <location>
        <position position="529"/>
    </location>
</feature>
<feature type="active site" evidence="1">
    <location>
        <position position="532"/>
    </location>
</feature>
<feature type="active site" description="Nucleophile" evidence="4">
    <location>
        <position position="1420"/>
    </location>
</feature>
<feature type="active site" evidence="1">
    <location>
        <position position="1423"/>
    </location>
</feature>
<feature type="active site" description="Proton donor" evidence="1">
    <location>
        <position position="1526"/>
    </location>
</feature>
<feature type="binding site" evidence="8">
    <location>
        <position position="289"/>
    </location>
    <ligand>
        <name>acarbose</name>
        <dbReference type="ChEBI" id="CHEBI:84363"/>
    </ligand>
</feature>
<feature type="binding site" evidence="8">
    <location>
        <position position="413"/>
    </location>
    <ligand>
        <name>acarbose</name>
        <dbReference type="ChEBI" id="CHEBI:84363"/>
    </ligand>
</feature>
<feature type="binding site" evidence="8">
    <location>
        <position position="612"/>
    </location>
    <ligand>
        <name>acarbose</name>
        <dbReference type="ChEBI" id="CHEBI:84363"/>
    </ligand>
</feature>
<feature type="binding site" evidence="8">
    <location>
        <position position="628"/>
    </location>
    <ligand>
        <name>acarbose</name>
        <dbReference type="ChEBI" id="CHEBI:84363"/>
    </ligand>
</feature>
<feature type="binding site" evidence="8">
    <location>
        <position position="686"/>
    </location>
    <ligand>
        <name>acarbose</name>
        <dbReference type="ChEBI" id="CHEBI:84363"/>
    </ligand>
</feature>
<feature type="modified residue" description="Sulfotyrosine" evidence="2">
    <location>
        <position position="416"/>
    </location>
</feature>
<feature type="modified residue" description="Sulfotyrosine" evidence="2">
    <location>
        <position position="425"/>
    </location>
</feature>
<feature type="modified residue" description="Sulfotyrosine" evidence="2">
    <location>
        <position position="1282"/>
    </location>
</feature>
<feature type="glycosylation site" description="N-linked (GlcNAc...) asparagine" evidence="2">
    <location>
        <position position="135"/>
    </location>
</feature>
<feature type="glycosylation site" description="N-linked (GlcNAc...) asparagine" evidence="8">
    <location>
        <position position="295"/>
    </location>
</feature>
<feature type="glycosylation site" description="N-linked (GlcNAc...) asparagine" evidence="2">
    <location>
        <position position="457"/>
    </location>
</feature>
<feature type="glycosylation site" description="N-linked (GlcNAc...) asparagine" evidence="2">
    <location>
        <position position="458"/>
    </location>
</feature>
<feature type="glycosylation site" description="N-linked (GlcNAc...) asparagine" evidence="8">
    <location>
        <position position="479"/>
    </location>
</feature>
<feature type="glycosylation site" description="N-linked (GlcNAc...) asparagine" evidence="2">
    <location>
        <position position="707"/>
    </location>
</feature>
<feature type="glycosylation site" description="N-linked (GlcNAc...) asparagine" evidence="2">
    <location>
        <position position="749"/>
    </location>
</feature>
<feature type="glycosylation site" description="N-linked (GlcNAc...) asparagine" evidence="8">
    <location>
        <position position="827"/>
    </location>
</feature>
<feature type="glycosylation site" description="N-linked (GlcNAc...) asparagine" evidence="2">
    <location>
        <position position="885"/>
    </location>
</feature>
<feature type="glycosylation site" description="N-linked (GlcNAc...) asparagine" evidence="2">
    <location>
        <position position="912"/>
    </location>
</feature>
<feature type="glycosylation site" description="N-linked (GlcNAc...) asparagine" evidence="2">
    <location>
        <position position="977"/>
    </location>
</feature>
<feature type="glycosylation site" description="N-linked (GlcNAc...) asparagine" evidence="2">
    <location>
        <position position="989"/>
    </location>
</feature>
<feature type="glycosylation site" description="N-linked (GlcNAc...) asparagine" evidence="2">
    <location>
        <position position="1255"/>
    </location>
</feature>
<feature type="glycosylation site" description="N-linked (GlcNAc...) asparagine" evidence="2">
    <location>
        <position position="1323"/>
    </location>
</feature>
<feature type="glycosylation site" description="N-linked (GlcNAc...) asparagine" evidence="2">
    <location>
        <position position="1364"/>
    </location>
</feature>
<feature type="glycosylation site" description="N-linked (GlcNAc...) asparagine" evidence="2">
    <location>
        <position position="1388"/>
    </location>
</feature>
<feature type="glycosylation site" description="N-linked (GlcNAc...) asparagine" evidence="2">
    <location>
        <position position="2499"/>
    </location>
</feature>
<feature type="glycosylation site" description="N-linked (GlcNAc...) asparagine" evidence="2">
    <location>
        <position position="2568"/>
    </location>
</feature>
<feature type="glycosylation site" description="N-linked (GlcNAc...) asparagine" evidence="2">
    <location>
        <position position="2738"/>
    </location>
</feature>
<feature type="glycosylation site" description="N-linked (GlcNAc...) asparagine" evidence="2">
    <location>
        <position position="2743"/>
    </location>
</feature>
<feature type="disulfide bond" evidence="3">
    <location>
        <begin position="90"/>
        <end position="118"/>
    </location>
</feature>
<feature type="disulfide bond" evidence="3 8">
    <location>
        <begin position="101"/>
        <end position="117"/>
    </location>
</feature>
<feature type="disulfide bond" evidence="3 8">
    <location>
        <begin position="112"/>
        <end position="130"/>
    </location>
</feature>
<feature type="disulfide bond" evidence="3 8">
    <location>
        <begin position="659"/>
        <end position="670"/>
    </location>
</feature>
<feature type="disulfide bond" evidence="3">
    <location>
        <begin position="966"/>
        <end position="983"/>
    </location>
</feature>
<feature type="disulfide bond" evidence="3">
    <location>
        <begin position="978"/>
        <end position="996"/>
    </location>
</feature>
<feature type="disulfide bond" evidence="3">
    <location>
        <begin position="1862"/>
        <end position="1879"/>
    </location>
</feature>
<feature type="disulfide bond" evidence="3">
    <location>
        <begin position="1874"/>
        <end position="1892"/>
    </location>
</feature>
<feature type="splice variant" id="VSP_061364" description="In isoform 1." evidence="22">
    <location>
        <begin position="1594"/>
        <end position="2489"/>
    </location>
</feature>
<feature type="sequence variant" id="VAR_047350" description="In dbSNP:rs2272330.">
    <original>Q</original>
    <variation>H</variation>
    <location>
        <position position="404"/>
    </location>
</feature>
<feature type="sequence variant" id="VAR_047351" description="In dbSNP:rs10266732.">
    <original>S</original>
    <variation>L</variation>
    <location>
        <position position="542"/>
    </location>
</feature>
<feature type="sequence variant" id="VAR_047352" description="In dbSNP:rs2960746." evidence="7 14">
    <original>N</original>
    <variation>D</variation>
    <location>
        <position position="858"/>
    </location>
</feature>
<feature type="sequence variant" id="VAR_047353" description="In dbSNP:rs9655651.">
    <original>L</original>
    <variation>I</variation>
    <location>
        <position position="2534"/>
    </location>
</feature>
<feature type="mutagenesis site" description="Decreases alpha-1,4-glucosidase activity toward maltose." evidence="10">
    <original>Y</original>
    <variation>W</variation>
    <location>
        <position position="385"/>
    </location>
</feature>
<feature type="mutagenesis site" description="Loss of alpha-1,4-glucosidase activity toward maltose." evidence="6">
    <original>D</original>
    <variation>A</variation>
    <location>
        <position position="529"/>
    </location>
</feature>
<feature type="mutagenesis site" description="Decreases alpha-1,4-glucosidase activity toward maltose." evidence="10">
    <original>Y</original>
    <variation>W</variation>
    <location>
        <position position="1251"/>
    </location>
</feature>
<feature type="mutagenesis site" description="Decreases alpha-1,4-glucosidase activity toward long oligomaltose substrates having four to seven D-glucose residues." evidence="10">
    <location>
        <begin position="1357"/>
        <end position="1377"/>
    </location>
</feature>
<feature type="sequence conflict" description="In Ref. 4; AAI20873." evidence="17" ref="4">
    <original>L</original>
    <variation>P</variation>
    <location>
        <position position="854"/>
    </location>
</feature>
<feature type="helix" evidence="26">
    <location>
        <begin position="95"/>
        <end position="97"/>
    </location>
</feature>
<feature type="strand" evidence="26">
    <location>
        <begin position="104"/>
        <end position="106"/>
    </location>
</feature>
<feature type="helix" evidence="26">
    <location>
        <begin position="109"/>
        <end position="115"/>
    </location>
</feature>
<feature type="strand" evidence="26">
    <location>
        <begin position="129"/>
        <end position="131"/>
    </location>
</feature>
<feature type="strand" evidence="26">
    <location>
        <begin position="136"/>
        <end position="146"/>
    </location>
</feature>
<feature type="strand" evidence="26">
    <location>
        <begin position="148"/>
        <end position="157"/>
    </location>
</feature>
<feature type="strand" evidence="26">
    <location>
        <begin position="163"/>
        <end position="165"/>
    </location>
</feature>
<feature type="strand" evidence="26">
    <location>
        <begin position="169"/>
        <end position="179"/>
    </location>
</feature>
<feature type="strand" evidence="26">
    <location>
        <begin position="182"/>
        <end position="189"/>
    </location>
</feature>
<feature type="strand" evidence="26">
    <location>
        <begin position="214"/>
        <end position="220"/>
    </location>
</feature>
<feature type="turn" evidence="26">
    <location>
        <begin position="221"/>
        <end position="224"/>
    </location>
</feature>
<feature type="strand" evidence="26">
    <location>
        <begin position="225"/>
        <end position="230"/>
    </location>
</feature>
<feature type="turn" evidence="26">
    <location>
        <begin position="231"/>
        <end position="233"/>
    </location>
</feature>
<feature type="strand" evidence="26">
    <location>
        <begin position="236"/>
        <end position="239"/>
    </location>
</feature>
<feature type="helix" evidence="26">
    <location>
        <begin position="240"/>
        <end position="242"/>
    </location>
</feature>
<feature type="strand" evidence="26">
    <location>
        <begin position="246"/>
        <end position="248"/>
    </location>
</feature>
<feature type="strand" evidence="26">
    <location>
        <begin position="251"/>
        <end position="257"/>
    </location>
</feature>
<feature type="strand" evidence="26">
    <location>
        <begin position="263"/>
        <end position="269"/>
    </location>
</feature>
<feature type="strand" evidence="26">
    <location>
        <begin position="272"/>
        <end position="276"/>
    </location>
</feature>
<feature type="strand" evidence="26">
    <location>
        <begin position="279"/>
        <end position="285"/>
    </location>
</feature>
<feature type="strand" evidence="26">
    <location>
        <begin position="303"/>
        <end position="309"/>
    </location>
</feature>
<feature type="strand" evidence="26">
    <location>
        <begin position="316"/>
        <end position="321"/>
    </location>
</feature>
<feature type="strand" evidence="26">
    <location>
        <begin position="327"/>
        <end position="332"/>
    </location>
</feature>
<feature type="turn" evidence="26">
    <location>
        <begin position="333"/>
        <end position="335"/>
    </location>
</feature>
<feature type="strand" evidence="26">
    <location>
        <begin position="336"/>
        <end position="344"/>
    </location>
</feature>
<feature type="strand" evidence="26">
    <location>
        <begin position="346"/>
        <end position="355"/>
    </location>
</feature>
<feature type="helix" evidence="26">
    <location>
        <begin position="356"/>
        <end position="367"/>
    </location>
</feature>
<feature type="helix" evidence="26">
    <location>
        <begin position="375"/>
        <end position="378"/>
    </location>
</feature>
<feature type="strand" evidence="26">
    <location>
        <begin position="379"/>
        <end position="382"/>
    </location>
</feature>
<feature type="helix" evidence="26">
    <location>
        <begin position="390"/>
        <end position="402"/>
    </location>
</feature>
<feature type="strand" evidence="26">
    <location>
        <begin position="409"/>
        <end position="412"/>
    </location>
</feature>
<feature type="helix" evidence="26">
    <location>
        <begin position="414"/>
        <end position="416"/>
    </location>
</feature>
<feature type="strand" evidence="24">
    <location>
        <begin position="417"/>
        <end position="420"/>
    </location>
</feature>
<feature type="turn" evidence="26">
    <location>
        <begin position="427"/>
        <end position="432"/>
    </location>
</feature>
<feature type="helix" evidence="26">
    <location>
        <begin position="433"/>
        <end position="442"/>
    </location>
</feature>
<feature type="strand" evidence="26">
    <location>
        <begin position="446"/>
        <end position="451"/>
    </location>
</feature>
<feature type="strand" evidence="26">
    <location>
        <begin position="461"/>
        <end position="463"/>
    </location>
</feature>
<feature type="helix" evidence="26">
    <location>
        <begin position="466"/>
        <end position="474"/>
    </location>
</feature>
<feature type="strand" evidence="26">
    <location>
        <begin position="483"/>
        <end position="486"/>
    </location>
</feature>
<feature type="strand" evidence="26">
    <location>
        <begin position="489"/>
        <end position="491"/>
    </location>
</feature>
<feature type="strand" evidence="26">
    <location>
        <begin position="494"/>
        <end position="497"/>
    </location>
</feature>
<feature type="helix" evidence="26">
    <location>
        <begin position="504"/>
        <end position="518"/>
    </location>
</feature>
<feature type="strand" evidence="26">
    <location>
        <begin position="524"/>
        <end position="528"/>
    </location>
</feature>
<feature type="turn" evidence="26">
    <location>
        <begin position="531"/>
        <end position="533"/>
    </location>
</feature>
<feature type="strand" evidence="26">
    <location>
        <begin position="536"/>
        <end position="540"/>
    </location>
</feature>
<feature type="turn" evidence="26">
    <location>
        <begin position="548"/>
        <end position="550"/>
    </location>
</feature>
<feature type="helix" evidence="26">
    <location>
        <begin position="559"/>
        <end position="561"/>
    </location>
</feature>
<feature type="turn" evidence="26">
    <location>
        <begin position="563"/>
        <end position="566"/>
    </location>
</feature>
<feature type="helix" evidence="26">
    <location>
        <begin position="579"/>
        <end position="582"/>
    </location>
</feature>
<feature type="helix" evidence="26">
    <location>
        <begin position="583"/>
        <end position="585"/>
    </location>
</feature>
<feature type="helix" evidence="26">
    <location>
        <begin position="586"/>
        <end position="601"/>
    </location>
</feature>
<feature type="strand" evidence="26">
    <location>
        <begin position="609"/>
        <end position="613"/>
    </location>
</feature>
<feature type="helix" evidence="26">
    <location>
        <begin position="618"/>
        <end position="620"/>
    </location>
</feature>
<feature type="strand" evidence="26">
    <location>
        <begin position="623"/>
        <end position="625"/>
    </location>
</feature>
<feature type="strand" evidence="26">
    <location>
        <begin position="630"/>
        <end position="632"/>
    </location>
</feature>
<feature type="helix" evidence="26">
    <location>
        <begin position="633"/>
        <end position="648"/>
    </location>
</feature>
<feature type="strand" evidence="26">
    <location>
        <begin position="653"/>
        <end position="655"/>
    </location>
</feature>
<feature type="strand" evidence="26">
    <location>
        <begin position="661"/>
        <end position="663"/>
    </location>
</feature>
<feature type="helix" evidence="26">
    <location>
        <begin position="667"/>
        <end position="677"/>
    </location>
</feature>
<feature type="strand" evidence="26">
    <location>
        <begin position="680"/>
        <end position="685"/>
    </location>
</feature>
<feature type="strand" evidence="25">
    <location>
        <begin position="689"/>
        <end position="691"/>
    </location>
</feature>
<feature type="helix" evidence="26">
    <location>
        <begin position="696"/>
        <end position="699"/>
    </location>
</feature>
<feature type="helix" evidence="26">
    <location>
        <begin position="704"/>
        <end position="718"/>
    </location>
</feature>
<feature type="helix" evidence="26">
    <location>
        <begin position="720"/>
        <end position="732"/>
    </location>
</feature>
<feature type="strand" evidence="26">
    <location>
        <begin position="737"/>
        <end position="739"/>
    </location>
</feature>
<feature type="helix" evidence="26">
    <location>
        <begin position="741"/>
        <end position="745"/>
    </location>
</feature>
<feature type="helix" evidence="26">
    <location>
        <begin position="749"/>
        <end position="751"/>
    </location>
</feature>
<feature type="strand" evidence="26">
    <location>
        <begin position="758"/>
        <end position="760"/>
    </location>
</feature>
<feature type="turn" evidence="26">
    <location>
        <begin position="761"/>
        <end position="763"/>
    </location>
</feature>
<feature type="strand" evidence="26">
    <location>
        <begin position="764"/>
        <end position="767"/>
    </location>
</feature>
<feature type="strand" evidence="26">
    <location>
        <begin position="775"/>
        <end position="781"/>
    </location>
</feature>
<feature type="strand" evidence="26">
    <location>
        <begin position="786"/>
        <end position="788"/>
    </location>
</feature>
<feature type="turn" evidence="26">
    <location>
        <begin position="789"/>
        <end position="791"/>
    </location>
</feature>
<feature type="strand" evidence="26">
    <location>
        <begin position="799"/>
        <end position="805"/>
    </location>
</feature>
<feature type="strand" evidence="26">
    <location>
        <begin position="812"/>
        <end position="816"/>
    </location>
</feature>
<feature type="strand" evidence="26">
    <location>
        <begin position="819"/>
        <end position="824"/>
    </location>
</feature>
<feature type="helix" evidence="26">
    <location>
        <begin position="830"/>
        <end position="833"/>
    </location>
</feature>
<feature type="strand" evidence="26">
    <location>
        <begin position="838"/>
        <end position="843"/>
    </location>
</feature>
<feature type="strand" evidence="26">
    <location>
        <begin position="850"/>
        <end position="856"/>
    </location>
</feature>
<feature type="strand" evidence="26">
    <location>
        <begin position="859"/>
        <end position="861"/>
    </location>
</feature>
<feature type="turn" evidence="26">
    <location>
        <begin position="862"/>
        <end position="868"/>
    </location>
</feature>
<feature type="strand" evidence="26">
    <location>
        <begin position="871"/>
        <end position="877"/>
    </location>
</feature>
<feature type="strand" evidence="26">
    <location>
        <begin position="879"/>
        <end position="889"/>
    </location>
</feature>
<feature type="strand" evidence="26">
    <location>
        <begin position="898"/>
        <end position="906"/>
    </location>
</feature>
<feature type="strand" evidence="26">
    <location>
        <begin position="911"/>
        <end position="917"/>
    </location>
</feature>
<feature type="strand" evidence="26">
    <location>
        <begin position="927"/>
        <end position="931"/>
    </location>
</feature>
<feature type="turn" evidence="26">
    <location>
        <begin position="932"/>
        <end position="935"/>
    </location>
</feature>
<feature type="strand" evidence="26">
    <location>
        <begin position="936"/>
        <end position="941"/>
    </location>
</feature>
<feature type="strand" evidence="26">
    <location>
        <begin position="950"/>
        <end position="954"/>
    </location>
</feature>
<feature type="helix" evidence="28">
    <location>
        <begin position="1871"/>
        <end position="1875"/>
    </location>
</feature>
<feature type="turn" evidence="28">
    <location>
        <begin position="1876"/>
        <end position="1878"/>
    </location>
</feature>
<feature type="strand" evidence="28">
    <location>
        <begin position="1879"/>
        <end position="1881"/>
    </location>
</feature>
<feature type="strand" evidence="28">
    <location>
        <begin position="1891"/>
        <end position="1896"/>
    </location>
</feature>
<feature type="strand" evidence="28">
    <location>
        <begin position="1898"/>
        <end position="1901"/>
    </location>
</feature>
<feature type="strand" evidence="28">
    <location>
        <begin position="1908"/>
        <end position="1918"/>
    </location>
</feature>
<feature type="helix" evidence="28">
    <location>
        <begin position="1920"/>
        <end position="1923"/>
    </location>
</feature>
<feature type="strand" evidence="28">
    <location>
        <begin position="1926"/>
        <end position="1928"/>
    </location>
</feature>
<feature type="strand" evidence="28">
    <location>
        <begin position="1932"/>
        <end position="1940"/>
    </location>
</feature>
<feature type="strand" evidence="28">
    <location>
        <begin position="1942"/>
        <end position="1951"/>
    </location>
</feature>
<feature type="strand" evidence="28">
    <location>
        <begin position="1953"/>
        <end position="1955"/>
    </location>
</feature>
<feature type="turn" evidence="28">
    <location>
        <begin position="1974"/>
        <end position="1976"/>
    </location>
</feature>
<feature type="strand" evidence="28">
    <location>
        <begin position="1979"/>
        <end position="1984"/>
    </location>
</feature>
<feature type="turn" evidence="28">
    <location>
        <begin position="1985"/>
        <end position="1988"/>
    </location>
</feature>
<feature type="strand" evidence="28">
    <location>
        <begin position="1989"/>
        <end position="1994"/>
    </location>
</feature>
<feature type="strand" evidence="28">
    <location>
        <begin position="2000"/>
        <end position="2003"/>
    </location>
</feature>
<feature type="strand" evidence="28">
    <location>
        <begin position="2010"/>
        <end position="2012"/>
    </location>
</feature>
<feature type="strand" evidence="28">
    <location>
        <begin position="2015"/>
        <end position="2021"/>
    </location>
</feature>
<feature type="strand" evidence="28">
    <location>
        <begin position="2023"/>
        <end position="2025"/>
    </location>
</feature>
<feature type="strand" evidence="28">
    <location>
        <begin position="2031"/>
        <end position="2033"/>
    </location>
</feature>
<feature type="strand" evidence="28">
    <location>
        <begin position="2036"/>
        <end position="2039"/>
    </location>
</feature>
<feature type="strand" evidence="28">
    <location>
        <begin position="2043"/>
        <end position="2050"/>
    </location>
</feature>
<feature type="strand" evidence="28">
    <location>
        <begin position="2068"/>
        <end position="2072"/>
    </location>
</feature>
<feature type="strand" evidence="28">
    <location>
        <begin position="2074"/>
        <end position="2076"/>
    </location>
</feature>
<feature type="strand" evidence="28">
    <location>
        <begin position="2078"/>
        <end position="2083"/>
    </location>
</feature>
<feature type="strand" evidence="28">
    <location>
        <begin position="2087"/>
        <end position="2094"/>
    </location>
</feature>
<feature type="turn" evidence="28">
    <location>
        <begin position="2095"/>
        <end position="2097"/>
    </location>
</feature>
<feature type="strand" evidence="28">
    <location>
        <begin position="2098"/>
        <end position="2106"/>
    </location>
</feature>
<feature type="strand" evidence="28">
    <location>
        <begin position="2108"/>
        <end position="2113"/>
    </location>
</feature>
<feature type="helix" evidence="28">
    <location>
        <begin position="2118"/>
        <end position="2129"/>
    </location>
</feature>
<feature type="helix" evidence="28">
    <location>
        <begin position="2137"/>
        <end position="2140"/>
    </location>
</feature>
<feature type="strand" evidence="27">
    <location>
        <begin position="2141"/>
        <end position="2144"/>
    </location>
</feature>
<feature type="helix" evidence="28">
    <location>
        <begin position="2152"/>
        <end position="2165"/>
    </location>
</feature>
<feature type="strand" evidence="28">
    <location>
        <begin position="2171"/>
        <end position="2174"/>
    </location>
</feature>
<feature type="helix" evidence="28">
    <location>
        <begin position="2176"/>
        <end position="2178"/>
    </location>
</feature>
<feature type="helix" evidence="27">
    <location>
        <begin position="2180"/>
        <end position="2182"/>
    </location>
</feature>
<feature type="helix" evidence="28">
    <location>
        <begin position="2189"/>
        <end position="2191"/>
    </location>
</feature>
<feature type="helix" evidence="28">
    <location>
        <begin position="2194"/>
        <end position="2203"/>
    </location>
</feature>
<feature type="strand" evidence="28">
    <location>
        <begin position="2207"/>
        <end position="2212"/>
    </location>
</feature>
<feature type="helix" evidence="28">
    <location>
        <begin position="2225"/>
        <end position="2233"/>
    </location>
</feature>
<feature type="strand" evidence="28">
    <location>
        <begin position="2240"/>
        <end position="2242"/>
    </location>
</feature>
<feature type="strand" evidence="28">
    <location>
        <begin position="2247"/>
        <end position="2253"/>
    </location>
</feature>
<feature type="helix" evidence="28">
    <location>
        <begin position="2265"/>
        <end position="2271"/>
    </location>
</feature>
<feature type="strand" evidence="28">
    <location>
        <begin position="2273"/>
        <end position="2277"/>
    </location>
</feature>
<feature type="helix" evidence="28">
    <location>
        <begin position="2284"/>
        <end position="2298"/>
    </location>
</feature>
<feature type="helix" evidence="28">
    <location>
        <begin position="2304"/>
        <end position="2306"/>
    </location>
</feature>
<feature type="strand" evidence="28">
    <location>
        <begin position="2311"/>
        <end position="2315"/>
    </location>
</feature>
<feature type="turn" evidence="28">
    <location>
        <begin position="2318"/>
        <end position="2320"/>
    </location>
</feature>
<feature type="strand" evidence="28">
    <location>
        <begin position="2323"/>
        <end position="2330"/>
    </location>
</feature>
<feature type="turn" evidence="28">
    <location>
        <begin position="2335"/>
        <end position="2337"/>
    </location>
</feature>
<feature type="helix" evidence="28">
    <location>
        <begin position="2349"/>
        <end position="2351"/>
    </location>
</feature>
<feature type="turn" evidence="28">
    <location>
        <begin position="2352"/>
        <end position="2356"/>
    </location>
</feature>
<feature type="strand" evidence="28">
    <location>
        <begin position="2363"/>
        <end position="2365"/>
    </location>
</feature>
<feature type="strand" evidence="28">
    <location>
        <begin position="2367"/>
        <end position="2369"/>
    </location>
</feature>
<feature type="strand" evidence="28">
    <location>
        <begin position="2371"/>
        <end position="2373"/>
    </location>
</feature>
<feature type="helix" evidence="28">
    <location>
        <begin position="2374"/>
        <end position="2377"/>
    </location>
</feature>
<feature type="helix" evidence="28">
    <location>
        <begin position="2378"/>
        <end position="2380"/>
    </location>
</feature>
<feature type="helix" evidence="28">
    <location>
        <begin position="2381"/>
        <end position="2397"/>
    </location>
</feature>
<feature type="strand" evidence="28">
    <location>
        <begin position="2403"/>
        <end position="2407"/>
    </location>
</feature>
<feature type="helix" evidence="28">
    <location>
        <begin position="2412"/>
        <end position="2414"/>
    </location>
</feature>
<feature type="strand" evidence="28">
    <location>
        <begin position="2417"/>
        <end position="2419"/>
    </location>
</feature>
<feature type="strand" evidence="28">
    <location>
        <begin position="2424"/>
        <end position="2426"/>
    </location>
</feature>
<feature type="helix" evidence="28">
    <location>
        <begin position="2428"/>
        <end position="2443"/>
    </location>
</feature>
<feature type="strand" evidence="28">
    <location>
        <begin position="2447"/>
        <end position="2449"/>
    </location>
</feature>
<feature type="strand" evidence="28">
    <location>
        <begin position="2455"/>
        <end position="2457"/>
    </location>
</feature>
<feature type="helix" evidence="28">
    <location>
        <begin position="2461"/>
        <end position="2471"/>
    </location>
</feature>
<feature type="strand" evidence="28">
    <location>
        <begin position="2474"/>
        <end position="2476"/>
    </location>
</feature>
<feature type="strand" evidence="28">
    <location>
        <begin position="2483"/>
        <end position="2485"/>
    </location>
</feature>
<feature type="helix" evidence="28">
    <location>
        <begin position="2490"/>
        <end position="2492"/>
    </location>
</feature>
<feature type="helix" evidence="28">
    <location>
        <begin position="2495"/>
        <end position="2525"/>
    </location>
</feature>
<feature type="strand" evidence="28">
    <location>
        <begin position="2529"/>
        <end position="2531"/>
    </location>
</feature>
<feature type="helix" evidence="28">
    <location>
        <begin position="2533"/>
        <end position="2535"/>
    </location>
</feature>
<feature type="turn" evidence="28">
    <location>
        <begin position="2541"/>
        <end position="2545"/>
    </location>
</feature>
<feature type="strand" evidence="28">
    <location>
        <begin position="2548"/>
        <end position="2552"/>
    </location>
</feature>
<feature type="turn" evidence="28">
    <location>
        <begin position="2553"/>
        <end position="2555"/>
    </location>
</feature>
<feature type="strand" evidence="28">
    <location>
        <begin position="2556"/>
        <end position="2559"/>
    </location>
</feature>
<feature type="strand" evidence="28">
    <location>
        <begin position="2563"/>
        <end position="2565"/>
    </location>
</feature>
<feature type="strand" evidence="28">
    <location>
        <begin position="2568"/>
        <end position="2573"/>
    </location>
</feature>
<feature type="strand" evidence="28">
    <location>
        <begin position="2578"/>
        <end position="2580"/>
    </location>
</feature>
<feature type="turn" evidence="28">
    <location>
        <begin position="2581"/>
        <end position="2583"/>
    </location>
</feature>
<feature type="strand" evidence="28">
    <location>
        <begin position="2590"/>
        <end position="2597"/>
    </location>
</feature>
<feature type="strand" evidence="28">
    <location>
        <begin position="2604"/>
        <end position="2608"/>
    </location>
</feature>
<feature type="strand" evidence="28">
    <location>
        <begin position="2610"/>
        <end position="2616"/>
    </location>
</feature>
<feature type="helix" evidence="28">
    <location>
        <begin position="2622"/>
        <end position="2625"/>
    </location>
</feature>
<feature type="strand" evidence="28">
    <location>
        <begin position="2630"/>
        <end position="2635"/>
    </location>
</feature>
<feature type="strand" evidence="28">
    <location>
        <begin position="2642"/>
        <end position="2648"/>
    </location>
</feature>
<feature type="strand" evidence="28">
    <location>
        <begin position="2651"/>
        <end position="2653"/>
    </location>
</feature>
<feature type="turn" evidence="28">
    <location>
        <begin position="2654"/>
        <end position="2656"/>
    </location>
</feature>
<feature type="helix" evidence="28">
    <location>
        <begin position="2657"/>
        <end position="2659"/>
    </location>
</feature>
<feature type="strand" evidence="28">
    <location>
        <begin position="2663"/>
        <end position="2669"/>
    </location>
</feature>
<feature type="strand" evidence="28">
    <location>
        <begin position="2674"/>
        <end position="2683"/>
    </location>
</feature>
<feature type="strand" evidence="28">
    <location>
        <begin position="2686"/>
        <end position="2688"/>
    </location>
</feature>
<feature type="strand" evidence="28">
    <location>
        <begin position="2691"/>
        <end position="2698"/>
    </location>
</feature>
<feature type="strand" evidence="28">
    <location>
        <begin position="2711"/>
        <end position="2717"/>
    </location>
</feature>
<feature type="strand" evidence="28">
    <location>
        <begin position="2725"/>
        <end position="2727"/>
    </location>
</feature>
<feature type="turn" evidence="28">
    <location>
        <begin position="2741"/>
        <end position="2743"/>
    </location>
</feature>
<keyword id="KW-0002">3D-structure</keyword>
<keyword id="KW-0025">Alternative splicing</keyword>
<keyword id="KW-1003">Cell membrane</keyword>
<keyword id="KW-0903">Direct protein sequencing</keyword>
<keyword id="KW-1015">Disulfide bond</keyword>
<keyword id="KW-0325">Glycoprotein</keyword>
<keyword id="KW-0326">Glycosidase</keyword>
<keyword id="KW-0378">Hydrolase</keyword>
<keyword id="KW-0472">Membrane</keyword>
<keyword id="KW-0511">Multifunctional enzyme</keyword>
<keyword id="KW-1267">Proteomics identification</keyword>
<keyword id="KW-1185">Reference proteome</keyword>
<keyword id="KW-0677">Repeat</keyword>
<keyword id="KW-0735">Signal-anchor</keyword>
<keyword id="KW-0765">Sulfation</keyword>
<keyword id="KW-0812">Transmembrane</keyword>
<keyword id="KW-1133">Transmembrane helix</keyword>
<proteinExistence type="evidence at protein level"/>
<protein>
    <recommendedName>
        <fullName evidence="15">Maltase-glucoamylase</fullName>
    </recommendedName>
    <alternativeName>
        <fullName>Alpha-1,4-glucosidase</fullName>
        <ecNumber evidence="8 9 10 12">3.2.1.20</ecNumber>
    </alternativeName>
</protein>
<accession>O43451</accession>
<accession>E7ER45</accession>
<accession>Q0VAX6</accession>
<accession>Q75ME7</accession>
<accession>Q86UM5</accession>
<evidence type="ECO:0000250" key="1"/>
<evidence type="ECO:0000255" key="2"/>
<evidence type="ECO:0000255" key="3">
    <source>
        <dbReference type="PROSITE-ProRule" id="PRU00779"/>
    </source>
</evidence>
<evidence type="ECO:0000255" key="4">
    <source>
        <dbReference type="PROSITE-ProRule" id="PRU10066"/>
    </source>
</evidence>
<evidence type="ECO:0000256" key="5">
    <source>
        <dbReference type="SAM" id="MobiDB-lite"/>
    </source>
</evidence>
<evidence type="ECO:0000269" key="6">
    <source>
    </source>
</evidence>
<evidence type="ECO:0000269" key="7">
    <source>
    </source>
</evidence>
<evidence type="ECO:0000269" key="8">
    <source>
    </source>
</evidence>
<evidence type="ECO:0000269" key="9">
    <source>
    </source>
</evidence>
<evidence type="ECO:0000269" key="10">
    <source>
    </source>
</evidence>
<evidence type="ECO:0000269" key="11">
    <source>
    </source>
</evidence>
<evidence type="ECO:0000269" key="12">
    <source>
    </source>
</evidence>
<evidence type="ECO:0000269" key="13">
    <source>
    </source>
</evidence>
<evidence type="ECO:0000269" key="14">
    <source>
    </source>
</evidence>
<evidence type="ECO:0000303" key="15">
    <source>
    </source>
</evidence>
<evidence type="ECO:0000303" key="16">
    <source>
    </source>
</evidence>
<evidence type="ECO:0000305" key="17"/>
<evidence type="ECO:0000305" key="18">
    <source>
    </source>
</evidence>
<evidence type="ECO:0000305" key="19">
    <source>
    </source>
</evidence>
<evidence type="ECO:0000305" key="20">
    <source>
    </source>
</evidence>
<evidence type="ECO:0000305" key="21">
    <source>
    </source>
</evidence>
<evidence type="ECO:0000305" key="22">
    <source>
    </source>
</evidence>
<evidence type="ECO:0000312" key="23">
    <source>
        <dbReference type="HGNC" id="HGNC:7043"/>
    </source>
</evidence>
<evidence type="ECO:0007829" key="24">
    <source>
        <dbReference type="PDB" id="2QLY"/>
    </source>
</evidence>
<evidence type="ECO:0007829" key="25">
    <source>
        <dbReference type="PDB" id="2QMJ"/>
    </source>
</evidence>
<evidence type="ECO:0007829" key="26">
    <source>
        <dbReference type="PDB" id="3L4Y"/>
    </source>
</evidence>
<evidence type="ECO:0007829" key="27">
    <source>
        <dbReference type="PDB" id="3TON"/>
    </source>
</evidence>
<evidence type="ECO:0007829" key="28">
    <source>
        <dbReference type="PDB" id="3TOP"/>
    </source>
</evidence>